<feature type="chain" id="PRO_0000409332" description="Regulatory-associated protein of TOR 1">
    <location>
        <begin position="1"/>
        <end position="1344"/>
    </location>
</feature>
<feature type="repeat" description="WD 1">
    <location>
        <begin position="1025"/>
        <end position="1064"/>
    </location>
</feature>
<feature type="repeat" description="WD 2">
    <location>
        <begin position="1070"/>
        <end position="1111"/>
    </location>
</feature>
<feature type="repeat" description="WD 3">
    <location>
        <begin position="1125"/>
        <end position="1164"/>
    </location>
</feature>
<feature type="repeat" description="WD 4">
    <location>
        <begin position="1168"/>
        <end position="1208"/>
    </location>
</feature>
<feature type="repeat" description="WD 5">
    <location>
        <begin position="1214"/>
        <end position="1255"/>
    </location>
</feature>
<feature type="repeat" description="WD 6">
    <location>
        <begin position="1259"/>
        <end position="1298"/>
    </location>
</feature>
<feature type="repeat" description="WD 7">
    <location>
        <begin position="1307"/>
        <end position="1344"/>
    </location>
</feature>
<feature type="region of interest" description="Disordered" evidence="1">
    <location>
        <begin position="28"/>
        <end position="56"/>
    </location>
</feature>
<feature type="region of interest" description="Disordered" evidence="1">
    <location>
        <begin position="771"/>
        <end position="818"/>
    </location>
</feature>
<feature type="compositionally biased region" description="Basic and acidic residues" evidence="1">
    <location>
        <begin position="28"/>
        <end position="44"/>
    </location>
</feature>
<feature type="compositionally biased region" description="Low complexity" evidence="1">
    <location>
        <begin position="785"/>
        <end position="816"/>
    </location>
</feature>
<feature type="helix" evidence="13">
    <location>
        <begin position="62"/>
        <end position="66"/>
    </location>
</feature>
<feature type="helix" evidence="13">
    <location>
        <begin position="76"/>
        <end position="78"/>
    </location>
</feature>
<feature type="turn" evidence="13">
    <location>
        <begin position="85"/>
        <end position="88"/>
    </location>
</feature>
<feature type="strand" evidence="13">
    <location>
        <begin position="106"/>
        <end position="115"/>
    </location>
</feature>
<feature type="strand" evidence="13">
    <location>
        <begin position="122"/>
        <end position="124"/>
    </location>
</feature>
<feature type="helix" evidence="13">
    <location>
        <begin position="139"/>
        <end position="142"/>
    </location>
</feature>
<feature type="helix" evidence="13">
    <location>
        <begin position="143"/>
        <end position="160"/>
    </location>
</feature>
<feature type="strand" evidence="13">
    <location>
        <begin position="163"/>
        <end position="173"/>
    </location>
</feature>
<feature type="helix" evidence="13">
    <location>
        <begin position="176"/>
        <end position="189"/>
    </location>
</feature>
<feature type="strand" evidence="13">
    <location>
        <begin position="191"/>
        <end position="204"/>
    </location>
</feature>
<feature type="strand" evidence="13">
    <location>
        <begin position="212"/>
        <end position="216"/>
    </location>
</feature>
<feature type="strand" evidence="13">
    <location>
        <begin position="218"/>
        <end position="220"/>
    </location>
</feature>
<feature type="strand" evidence="13">
    <location>
        <begin position="222"/>
        <end position="227"/>
    </location>
</feature>
<feature type="helix" evidence="13">
    <location>
        <begin position="228"/>
        <end position="234"/>
    </location>
</feature>
<feature type="strand" evidence="13">
    <location>
        <begin position="237"/>
        <end position="247"/>
    </location>
</feature>
<feature type="helix" evidence="13">
    <location>
        <begin position="249"/>
        <end position="256"/>
    </location>
</feature>
<feature type="strand" evidence="13">
    <location>
        <begin position="263"/>
        <end position="268"/>
    </location>
</feature>
<feature type="strand" evidence="13">
    <location>
        <begin position="271"/>
        <end position="279"/>
    </location>
</feature>
<feature type="helix" evidence="13">
    <location>
        <begin position="295"/>
        <end position="301"/>
    </location>
</feature>
<feature type="helix" evidence="13">
    <location>
        <begin position="303"/>
        <end position="313"/>
    </location>
</feature>
<feature type="turn" evidence="13">
    <location>
        <begin position="314"/>
        <end position="316"/>
    </location>
</feature>
<feature type="strand" evidence="13">
    <location>
        <begin position="318"/>
        <end position="321"/>
    </location>
</feature>
<feature type="turn" evidence="13">
    <location>
        <begin position="323"/>
        <end position="328"/>
    </location>
</feature>
<feature type="helix" evidence="13">
    <location>
        <begin position="339"/>
        <end position="358"/>
    </location>
</feature>
<feature type="helix" evidence="13">
    <location>
        <begin position="361"/>
        <end position="369"/>
    </location>
</feature>
<feature type="helix" evidence="13">
    <location>
        <begin position="372"/>
        <end position="389"/>
    </location>
</feature>
<feature type="turn" evidence="13">
    <location>
        <begin position="390"/>
        <end position="392"/>
    </location>
</feature>
<feature type="strand" evidence="13">
    <location>
        <begin position="396"/>
        <end position="399"/>
    </location>
</feature>
<feature type="helix" evidence="13">
    <location>
        <begin position="410"/>
        <end position="429"/>
    </location>
</feature>
<feature type="helix" evidence="13">
    <location>
        <begin position="440"/>
        <end position="453"/>
    </location>
</feature>
<feature type="strand" evidence="13">
    <location>
        <begin position="457"/>
        <end position="460"/>
    </location>
</feature>
<feature type="helix" evidence="13">
    <location>
        <begin position="465"/>
        <end position="471"/>
    </location>
</feature>
<feature type="turn" evidence="13">
    <location>
        <begin position="475"/>
        <end position="477"/>
    </location>
</feature>
<feature type="helix" evidence="13">
    <location>
        <begin position="478"/>
        <end position="490"/>
    </location>
</feature>
<feature type="helix" evidence="13">
    <location>
        <begin position="493"/>
        <end position="502"/>
    </location>
</feature>
<feature type="helix" evidence="13">
    <location>
        <begin position="505"/>
        <end position="510"/>
    </location>
</feature>
<feature type="helix" evidence="13">
    <location>
        <begin position="511"/>
        <end position="513"/>
    </location>
</feature>
<feature type="helix" evidence="13">
    <location>
        <begin position="517"/>
        <end position="519"/>
    </location>
</feature>
<feature type="helix" evidence="13">
    <location>
        <begin position="520"/>
        <end position="531"/>
    </location>
</feature>
<feature type="helix" evidence="13">
    <location>
        <begin position="537"/>
        <end position="543"/>
    </location>
</feature>
<feature type="turn" evidence="13">
    <location>
        <begin position="544"/>
        <end position="546"/>
    </location>
</feature>
<feature type="helix" evidence="13">
    <location>
        <begin position="547"/>
        <end position="555"/>
    </location>
</feature>
<feature type="helix" evidence="13">
    <location>
        <begin position="561"/>
        <end position="575"/>
    </location>
</feature>
<feature type="helix" evidence="13">
    <location>
        <begin position="579"/>
        <end position="587"/>
    </location>
</feature>
<feature type="helix" evidence="13">
    <location>
        <begin position="590"/>
        <end position="597"/>
    </location>
</feature>
<feature type="helix" evidence="13">
    <location>
        <begin position="610"/>
        <end position="624"/>
    </location>
</feature>
<feature type="helix" evidence="13">
    <location>
        <begin position="628"/>
        <end position="636"/>
    </location>
</feature>
<feature type="helix" evidence="13">
    <location>
        <begin position="639"/>
        <end position="643"/>
    </location>
</feature>
<feature type="helix" evidence="13">
    <location>
        <begin position="644"/>
        <end position="647"/>
    </location>
</feature>
<feature type="strand" evidence="13">
    <location>
        <begin position="648"/>
        <end position="650"/>
    </location>
</feature>
<feature type="helix" evidence="13">
    <location>
        <begin position="652"/>
        <end position="664"/>
    </location>
</feature>
<feature type="helix" evidence="13">
    <location>
        <begin position="686"/>
        <end position="700"/>
    </location>
</feature>
<feature type="helix" evidence="13">
    <location>
        <begin position="706"/>
        <end position="722"/>
    </location>
</feature>
<feature type="helix" evidence="13">
    <location>
        <begin position="724"/>
        <end position="734"/>
    </location>
</feature>
<feature type="helix" evidence="13">
    <location>
        <begin position="832"/>
        <end position="844"/>
    </location>
</feature>
<feature type="helix" evidence="13">
    <location>
        <begin position="849"/>
        <end position="861"/>
    </location>
</feature>
<feature type="strand" evidence="13">
    <location>
        <begin position="959"/>
        <end position="961"/>
    </location>
</feature>
<feature type="helix" evidence="13">
    <location>
        <begin position="966"/>
        <end position="970"/>
    </location>
</feature>
<feature type="helix" evidence="13">
    <location>
        <begin position="971"/>
        <end position="973"/>
    </location>
</feature>
<feature type="helix" evidence="13">
    <location>
        <begin position="986"/>
        <end position="1008"/>
    </location>
</feature>
<feature type="strand" evidence="13">
    <location>
        <begin position="1015"/>
        <end position="1017"/>
    </location>
</feature>
<feature type="strand" evidence="13">
    <location>
        <begin position="1030"/>
        <end position="1035"/>
    </location>
</feature>
<feature type="strand" evidence="13">
    <location>
        <begin position="1037"/>
        <end position="1046"/>
    </location>
</feature>
<feature type="strand" evidence="13">
    <location>
        <begin position="1050"/>
        <end position="1055"/>
    </location>
</feature>
<feature type="turn" evidence="13">
    <location>
        <begin position="1056"/>
        <end position="1059"/>
    </location>
</feature>
<feature type="strand" evidence="13">
    <location>
        <begin position="1060"/>
        <end position="1067"/>
    </location>
</feature>
<feature type="strand" evidence="13">
    <location>
        <begin position="1075"/>
        <end position="1081"/>
    </location>
</feature>
<feature type="strand" evidence="13">
    <location>
        <begin position="1088"/>
        <end position="1093"/>
    </location>
</feature>
<feature type="strand" evidence="13">
    <location>
        <begin position="1096"/>
        <end position="1103"/>
    </location>
</feature>
<feature type="strand" evidence="14">
    <location>
        <begin position="1106"/>
        <end position="1108"/>
    </location>
</feature>
<feature type="strand" evidence="13">
    <location>
        <begin position="1111"/>
        <end position="1117"/>
    </location>
</feature>
<feature type="strand" evidence="13">
    <location>
        <begin position="1132"/>
        <end position="1136"/>
    </location>
</feature>
<feature type="turn" evidence="13">
    <location>
        <begin position="1137"/>
        <end position="1140"/>
    </location>
</feature>
<feature type="strand" evidence="13">
    <location>
        <begin position="1141"/>
        <end position="1155"/>
    </location>
</feature>
<feature type="turn" evidence="13">
    <location>
        <begin position="1156"/>
        <end position="1159"/>
    </location>
</feature>
<feature type="strand" evidence="13">
    <location>
        <begin position="1160"/>
        <end position="1166"/>
    </location>
</feature>
<feature type="strand" evidence="13">
    <location>
        <begin position="1169"/>
        <end position="1171"/>
    </location>
</feature>
<feature type="strand" evidence="13">
    <location>
        <begin position="1173"/>
        <end position="1178"/>
    </location>
</feature>
<feature type="strand" evidence="13">
    <location>
        <begin position="1180"/>
        <end position="1182"/>
    </location>
</feature>
<feature type="strand" evidence="13">
    <location>
        <begin position="1185"/>
        <end position="1190"/>
    </location>
</feature>
<feature type="strand" evidence="13">
    <location>
        <begin position="1195"/>
        <end position="1199"/>
    </location>
</feature>
<feature type="strand" evidence="13">
    <location>
        <begin position="1202"/>
        <end position="1204"/>
    </location>
</feature>
<feature type="strand" evidence="13">
    <location>
        <begin position="1206"/>
        <end position="1210"/>
    </location>
</feature>
<feature type="strand" evidence="13">
    <location>
        <begin position="1219"/>
        <end position="1221"/>
    </location>
</feature>
<feature type="strand" evidence="13">
    <location>
        <begin position="1226"/>
        <end position="1232"/>
    </location>
</feature>
<feature type="strand" evidence="13">
    <location>
        <begin position="1240"/>
        <end position="1246"/>
    </location>
</feature>
<feature type="turn" evidence="13">
    <location>
        <begin position="1247"/>
        <end position="1249"/>
    </location>
</feature>
<feature type="strand" evidence="13">
    <location>
        <begin position="1254"/>
        <end position="1258"/>
    </location>
</feature>
<feature type="strand" evidence="13">
    <location>
        <begin position="1264"/>
        <end position="1269"/>
    </location>
</feature>
<feature type="strand" evidence="13">
    <location>
        <begin position="1271"/>
        <end position="1289"/>
    </location>
</feature>
<feature type="strand" evidence="13">
    <location>
        <begin position="1294"/>
        <end position="1299"/>
    </location>
</feature>
<feature type="strand" evidence="13">
    <location>
        <begin position="1303"/>
        <end position="1305"/>
    </location>
</feature>
<feature type="strand" evidence="13">
    <location>
        <begin position="1314"/>
        <end position="1317"/>
    </location>
</feature>
<feature type="strand" evidence="13">
    <location>
        <begin position="1319"/>
        <end position="1327"/>
    </location>
</feature>
<feature type="strand" evidence="13">
    <location>
        <begin position="1329"/>
        <end position="1337"/>
    </location>
</feature>
<organism>
    <name type="scientific">Arabidopsis thaliana</name>
    <name type="common">Mouse-ear cress</name>
    <dbReference type="NCBI Taxonomy" id="3702"/>
    <lineage>
        <taxon>Eukaryota</taxon>
        <taxon>Viridiplantae</taxon>
        <taxon>Streptophyta</taxon>
        <taxon>Embryophyta</taxon>
        <taxon>Tracheophyta</taxon>
        <taxon>Spermatophyta</taxon>
        <taxon>Magnoliopsida</taxon>
        <taxon>eudicotyledons</taxon>
        <taxon>Gunneridae</taxon>
        <taxon>Pentapetalae</taxon>
        <taxon>rosids</taxon>
        <taxon>malvids</taxon>
        <taxon>Brassicales</taxon>
        <taxon>Brassicaceae</taxon>
        <taxon>Camelineae</taxon>
        <taxon>Arabidopsis</taxon>
    </lineage>
</organism>
<name>RTOR1_ARATH</name>
<dbReference type="EMBL" id="AC010871">
    <property type="protein sequence ID" value="AAF07837.1"/>
    <property type="status" value="ALT_SEQ"/>
    <property type="molecule type" value="Genomic_DNA"/>
</dbReference>
<dbReference type="EMBL" id="CP002686">
    <property type="protein sequence ID" value="AEE74687.1"/>
    <property type="molecule type" value="Genomic_DNA"/>
</dbReference>
<dbReference type="EMBL" id="AY059838">
    <property type="protein sequence ID" value="AAL24320.1"/>
    <property type="molecule type" value="mRNA"/>
</dbReference>
<dbReference type="EMBL" id="BT008813">
    <property type="protein sequence ID" value="AAP68252.1"/>
    <property type="molecule type" value="mRNA"/>
</dbReference>
<dbReference type="EMBL" id="AY769948">
    <property type="protein sequence ID" value="AAV84960.1"/>
    <property type="molecule type" value="mRNA"/>
</dbReference>
<dbReference type="RefSeq" id="NP_566335.1">
    <property type="nucleotide sequence ID" value="NM_111719.3"/>
</dbReference>
<dbReference type="PDB" id="5WBI">
    <property type="method" value="X-ray"/>
    <property type="resolution" value="3.00 A"/>
    <property type="chains" value="A=1-1344"/>
</dbReference>
<dbReference type="PDB" id="5WBJ">
    <property type="method" value="X-ray"/>
    <property type="resolution" value="3.00 A"/>
    <property type="chains" value="A=1-1344"/>
</dbReference>
<dbReference type="PDB" id="5WBK">
    <property type="method" value="X-ray"/>
    <property type="resolution" value="3.11 A"/>
    <property type="chains" value="A=1-1344"/>
</dbReference>
<dbReference type="PDB" id="5WBL">
    <property type="method" value="X-ray"/>
    <property type="resolution" value="3.35 A"/>
    <property type="chains" value="A=1-1344"/>
</dbReference>
<dbReference type="PDBsum" id="5WBI"/>
<dbReference type="PDBsum" id="5WBJ"/>
<dbReference type="PDBsum" id="5WBK"/>
<dbReference type="PDBsum" id="5WBL"/>
<dbReference type="SMR" id="Q93YQ1"/>
<dbReference type="BioGRID" id="5366">
    <property type="interactions" value="86"/>
</dbReference>
<dbReference type="FunCoup" id="Q93YQ1">
    <property type="interactions" value="4092"/>
</dbReference>
<dbReference type="IntAct" id="Q93YQ1">
    <property type="interactions" value="144"/>
</dbReference>
<dbReference type="STRING" id="3702.Q93YQ1"/>
<dbReference type="iPTMnet" id="Q93YQ1"/>
<dbReference type="PaxDb" id="3702-AT3G08850.1"/>
<dbReference type="ProteomicsDB" id="228031"/>
<dbReference type="EnsemblPlants" id="AT3G08850.1">
    <property type="protein sequence ID" value="AT3G08850.1"/>
    <property type="gene ID" value="AT3G08850"/>
</dbReference>
<dbReference type="GeneID" id="820032"/>
<dbReference type="Gramene" id="AT3G08850.1">
    <property type="protein sequence ID" value="AT3G08850.1"/>
    <property type="gene ID" value="AT3G08850"/>
</dbReference>
<dbReference type="KEGG" id="ath:AT3G08850"/>
<dbReference type="Araport" id="AT3G08850"/>
<dbReference type="TAIR" id="AT3G08850">
    <property type="gene designation" value="RAPTOR1"/>
</dbReference>
<dbReference type="eggNOG" id="KOG1517">
    <property type="taxonomic scope" value="Eukaryota"/>
</dbReference>
<dbReference type="HOGENOM" id="CLU_001136_3_0_1"/>
<dbReference type="InParanoid" id="Q93YQ1"/>
<dbReference type="OMA" id="TEVCTND"/>
<dbReference type="OrthoDB" id="10262360at2759"/>
<dbReference type="PhylomeDB" id="Q93YQ1"/>
<dbReference type="PRO" id="PR:Q93YQ1"/>
<dbReference type="Proteomes" id="UP000006548">
    <property type="component" value="Chromosome 3"/>
</dbReference>
<dbReference type="ExpressionAtlas" id="Q93YQ1">
    <property type="expression patterns" value="baseline and differential"/>
</dbReference>
<dbReference type="GO" id="GO:0080008">
    <property type="term" value="C:Cul4-RING E3 ubiquitin ligase complex"/>
    <property type="evidence" value="ECO:0000250"/>
    <property type="project" value="TAIR"/>
</dbReference>
<dbReference type="GO" id="GO:0005737">
    <property type="term" value="C:cytoplasm"/>
    <property type="evidence" value="ECO:0000314"/>
    <property type="project" value="UniProtKB"/>
</dbReference>
<dbReference type="GO" id="GO:0031931">
    <property type="term" value="C:TORC1 complex"/>
    <property type="evidence" value="ECO:0007669"/>
    <property type="project" value="InterPro"/>
</dbReference>
<dbReference type="GO" id="GO:0019900">
    <property type="term" value="F:kinase binding"/>
    <property type="evidence" value="ECO:0000353"/>
    <property type="project" value="UniProtKB"/>
</dbReference>
<dbReference type="GO" id="GO:0009793">
    <property type="term" value="P:embryo development ending in seed dormancy"/>
    <property type="evidence" value="ECO:0000315"/>
    <property type="project" value="TAIR"/>
</dbReference>
<dbReference type="GO" id="GO:0010492">
    <property type="term" value="P:maintenance of shoot apical meristem identity"/>
    <property type="evidence" value="ECO:0000315"/>
    <property type="project" value="TAIR"/>
</dbReference>
<dbReference type="GO" id="GO:0010507">
    <property type="term" value="P:negative regulation of autophagy"/>
    <property type="evidence" value="ECO:0000315"/>
    <property type="project" value="UniProtKB"/>
</dbReference>
<dbReference type="GO" id="GO:0031929">
    <property type="term" value="P:TOR signaling"/>
    <property type="evidence" value="ECO:0007669"/>
    <property type="project" value="InterPro"/>
</dbReference>
<dbReference type="FunFam" id="1.25.10.10:FF:000145">
    <property type="entry name" value="Regulatory-associated protein of TOR 1"/>
    <property type="match status" value="1"/>
</dbReference>
<dbReference type="FunFam" id="2.130.10.10:FF:000571">
    <property type="entry name" value="Regulatory-associated protein of TOR 2"/>
    <property type="match status" value="1"/>
</dbReference>
<dbReference type="Gene3D" id="1.25.10.10">
    <property type="entry name" value="Leucine-rich Repeat Variant"/>
    <property type="match status" value="1"/>
</dbReference>
<dbReference type="Gene3D" id="2.130.10.10">
    <property type="entry name" value="YVTN repeat-like/Quinoprotein amine dehydrogenase"/>
    <property type="match status" value="1"/>
</dbReference>
<dbReference type="InterPro" id="IPR011989">
    <property type="entry name" value="ARM-like"/>
</dbReference>
<dbReference type="InterPro" id="IPR016024">
    <property type="entry name" value="ARM-type_fold"/>
</dbReference>
<dbReference type="InterPro" id="IPR004083">
    <property type="entry name" value="Raptor"/>
</dbReference>
<dbReference type="InterPro" id="IPR029347">
    <property type="entry name" value="Raptor_N"/>
</dbReference>
<dbReference type="InterPro" id="IPR015943">
    <property type="entry name" value="WD40/YVTN_repeat-like_dom_sf"/>
</dbReference>
<dbReference type="InterPro" id="IPR036322">
    <property type="entry name" value="WD40_repeat_dom_sf"/>
</dbReference>
<dbReference type="InterPro" id="IPR001680">
    <property type="entry name" value="WD40_rpt"/>
</dbReference>
<dbReference type="PANTHER" id="PTHR12848">
    <property type="entry name" value="REGULATORY-ASSOCIATED PROTEIN OF MTOR"/>
    <property type="match status" value="1"/>
</dbReference>
<dbReference type="PANTHER" id="PTHR12848:SF16">
    <property type="entry name" value="REGULATORY-ASSOCIATED PROTEIN OF MTOR"/>
    <property type="match status" value="1"/>
</dbReference>
<dbReference type="Pfam" id="PF14538">
    <property type="entry name" value="Raptor_N"/>
    <property type="match status" value="1"/>
</dbReference>
<dbReference type="Pfam" id="PF00400">
    <property type="entry name" value="WD40"/>
    <property type="match status" value="2"/>
</dbReference>
<dbReference type="PRINTS" id="PR01547">
    <property type="entry name" value="YEAST176DUF"/>
</dbReference>
<dbReference type="SMART" id="SM01302">
    <property type="entry name" value="Raptor_N"/>
    <property type="match status" value="1"/>
</dbReference>
<dbReference type="SMART" id="SM00320">
    <property type="entry name" value="WD40"/>
    <property type="match status" value="7"/>
</dbReference>
<dbReference type="SUPFAM" id="SSF48371">
    <property type="entry name" value="ARM repeat"/>
    <property type="match status" value="1"/>
</dbReference>
<dbReference type="SUPFAM" id="SSF50978">
    <property type="entry name" value="WD40 repeat-like"/>
    <property type="match status" value="1"/>
</dbReference>
<dbReference type="PROSITE" id="PS50294">
    <property type="entry name" value="WD_REPEATS_REGION"/>
    <property type="match status" value="1"/>
</dbReference>
<gene>
    <name type="primary">RAPTOR1</name>
    <name type="synonym">RAPTOR1B</name>
    <name type="ordered locus">At3g08850</name>
    <name type="ORF">T16O11.22</name>
</gene>
<keyword id="KW-0002">3D-structure</keyword>
<keyword id="KW-0963">Cytoplasm</keyword>
<keyword id="KW-0217">Developmental protein</keyword>
<keyword id="KW-0341">Growth regulation</keyword>
<keyword id="KW-1185">Reference proteome</keyword>
<keyword id="KW-0677">Repeat</keyword>
<keyword id="KW-0853">WD repeat</keyword>
<protein>
    <recommendedName>
        <fullName>Regulatory-associated protein of TOR 1</fullName>
    </recommendedName>
    <alternativeName>
        <fullName>Protein RAPTOR 1</fullName>
    </alternativeName>
    <alternativeName>
        <fullName>Protein RAPTOR 1B</fullName>
        <shortName>AtRaptor1b</shortName>
    </alternativeName>
</protein>
<evidence type="ECO:0000256" key="1">
    <source>
        <dbReference type="SAM" id="MobiDB-lite"/>
    </source>
</evidence>
<evidence type="ECO:0000269" key="2">
    <source>
    </source>
</evidence>
<evidence type="ECO:0000269" key="3">
    <source>
    </source>
</evidence>
<evidence type="ECO:0000269" key="4">
    <source>
    </source>
</evidence>
<evidence type="ECO:0000269" key="5">
    <source>
    </source>
</evidence>
<evidence type="ECO:0000269" key="6">
    <source>
    </source>
</evidence>
<evidence type="ECO:0000269" key="7">
    <source>
    </source>
</evidence>
<evidence type="ECO:0000305" key="8"/>
<evidence type="ECO:0007744" key="9">
    <source>
        <dbReference type="PDB" id="5WBI"/>
    </source>
</evidence>
<evidence type="ECO:0007744" key="10">
    <source>
        <dbReference type="PDB" id="5WBJ"/>
    </source>
</evidence>
<evidence type="ECO:0007744" key="11">
    <source>
        <dbReference type="PDB" id="5WBK"/>
    </source>
</evidence>
<evidence type="ECO:0007744" key="12">
    <source>
        <dbReference type="PDB" id="5WBL"/>
    </source>
</evidence>
<evidence type="ECO:0007829" key="13">
    <source>
        <dbReference type="PDB" id="5WBI"/>
    </source>
</evidence>
<evidence type="ECO:0007829" key="14">
    <source>
        <dbReference type="PDB" id="5WBJ"/>
    </source>
</evidence>
<reference key="1">
    <citation type="journal article" date="2000" name="Nature">
        <title>Sequence and analysis of chromosome 3 of the plant Arabidopsis thaliana.</title>
        <authorList>
            <person name="Salanoubat M."/>
            <person name="Lemcke K."/>
            <person name="Rieger M."/>
            <person name="Ansorge W."/>
            <person name="Unseld M."/>
            <person name="Fartmann B."/>
            <person name="Valle G."/>
            <person name="Bloecker H."/>
            <person name="Perez-Alonso M."/>
            <person name="Obermaier B."/>
            <person name="Delseny M."/>
            <person name="Boutry M."/>
            <person name="Grivell L.A."/>
            <person name="Mache R."/>
            <person name="Puigdomenech P."/>
            <person name="De Simone V."/>
            <person name="Choisne N."/>
            <person name="Artiguenave F."/>
            <person name="Robert C."/>
            <person name="Brottier P."/>
            <person name="Wincker P."/>
            <person name="Cattolico L."/>
            <person name="Weissenbach J."/>
            <person name="Saurin W."/>
            <person name="Quetier F."/>
            <person name="Schaefer M."/>
            <person name="Mueller-Auer S."/>
            <person name="Gabel C."/>
            <person name="Fuchs M."/>
            <person name="Benes V."/>
            <person name="Wurmbach E."/>
            <person name="Drzonek H."/>
            <person name="Erfle H."/>
            <person name="Jordan N."/>
            <person name="Bangert S."/>
            <person name="Wiedelmann R."/>
            <person name="Kranz H."/>
            <person name="Voss H."/>
            <person name="Holland R."/>
            <person name="Brandt P."/>
            <person name="Nyakatura G."/>
            <person name="Vezzi A."/>
            <person name="D'Angelo M."/>
            <person name="Pallavicini A."/>
            <person name="Toppo S."/>
            <person name="Simionati B."/>
            <person name="Conrad A."/>
            <person name="Hornischer K."/>
            <person name="Kauer G."/>
            <person name="Loehnert T.-H."/>
            <person name="Nordsiek G."/>
            <person name="Reichelt J."/>
            <person name="Scharfe M."/>
            <person name="Schoen O."/>
            <person name="Bargues M."/>
            <person name="Terol J."/>
            <person name="Climent J."/>
            <person name="Navarro P."/>
            <person name="Collado C."/>
            <person name="Perez-Perez A."/>
            <person name="Ottenwaelder B."/>
            <person name="Duchemin D."/>
            <person name="Cooke R."/>
            <person name="Laudie M."/>
            <person name="Berger-Llauro C."/>
            <person name="Purnelle B."/>
            <person name="Masuy D."/>
            <person name="de Haan M."/>
            <person name="Maarse A.C."/>
            <person name="Alcaraz J.-P."/>
            <person name="Cottet A."/>
            <person name="Casacuberta E."/>
            <person name="Monfort A."/>
            <person name="Argiriou A."/>
            <person name="Flores M."/>
            <person name="Liguori R."/>
            <person name="Vitale D."/>
            <person name="Mannhaupt G."/>
            <person name="Haase D."/>
            <person name="Schoof H."/>
            <person name="Rudd S."/>
            <person name="Zaccaria P."/>
            <person name="Mewes H.-W."/>
            <person name="Mayer K.F.X."/>
            <person name="Kaul S."/>
            <person name="Town C.D."/>
            <person name="Koo H.L."/>
            <person name="Tallon L.J."/>
            <person name="Jenkins J."/>
            <person name="Rooney T."/>
            <person name="Rizzo M."/>
            <person name="Walts A."/>
            <person name="Utterback T."/>
            <person name="Fujii C.Y."/>
            <person name="Shea T.P."/>
            <person name="Creasy T.H."/>
            <person name="Haas B."/>
            <person name="Maiti R."/>
            <person name="Wu D."/>
            <person name="Peterson J."/>
            <person name="Van Aken S."/>
            <person name="Pai G."/>
            <person name="Militscher J."/>
            <person name="Sellers P."/>
            <person name="Gill J.E."/>
            <person name="Feldblyum T.V."/>
            <person name="Preuss D."/>
            <person name="Lin X."/>
            <person name="Nierman W.C."/>
            <person name="Salzberg S.L."/>
            <person name="White O."/>
            <person name="Venter J.C."/>
            <person name="Fraser C.M."/>
            <person name="Kaneko T."/>
            <person name="Nakamura Y."/>
            <person name="Sato S."/>
            <person name="Kato T."/>
            <person name="Asamizu E."/>
            <person name="Sasamoto S."/>
            <person name="Kimura T."/>
            <person name="Idesawa K."/>
            <person name="Kawashima K."/>
            <person name="Kishida Y."/>
            <person name="Kiyokawa C."/>
            <person name="Kohara M."/>
            <person name="Matsumoto M."/>
            <person name="Matsuno A."/>
            <person name="Muraki A."/>
            <person name="Nakayama S."/>
            <person name="Nakazaki N."/>
            <person name="Shinpo S."/>
            <person name="Takeuchi C."/>
            <person name="Wada T."/>
            <person name="Watanabe A."/>
            <person name="Yamada M."/>
            <person name="Yasuda M."/>
            <person name="Tabata S."/>
        </authorList>
    </citation>
    <scope>NUCLEOTIDE SEQUENCE [LARGE SCALE GENOMIC DNA]</scope>
    <source>
        <strain>cv. Columbia</strain>
    </source>
</reference>
<reference key="2">
    <citation type="journal article" date="2017" name="Plant J.">
        <title>Araport11: a complete reannotation of the Arabidopsis thaliana reference genome.</title>
        <authorList>
            <person name="Cheng C.Y."/>
            <person name="Krishnakumar V."/>
            <person name="Chan A.P."/>
            <person name="Thibaud-Nissen F."/>
            <person name="Schobel S."/>
            <person name="Town C.D."/>
        </authorList>
    </citation>
    <scope>GENOME REANNOTATION</scope>
    <source>
        <strain>cv. Columbia</strain>
    </source>
</reference>
<reference key="3">
    <citation type="journal article" date="2003" name="Science">
        <title>Empirical analysis of transcriptional activity in the Arabidopsis genome.</title>
        <authorList>
            <person name="Yamada K."/>
            <person name="Lim J."/>
            <person name="Dale J.M."/>
            <person name="Chen H."/>
            <person name="Shinn P."/>
            <person name="Palm C.J."/>
            <person name="Southwick A.M."/>
            <person name="Wu H.C."/>
            <person name="Kim C.J."/>
            <person name="Nguyen M."/>
            <person name="Pham P.K."/>
            <person name="Cheuk R.F."/>
            <person name="Karlin-Newmann G."/>
            <person name="Liu S.X."/>
            <person name="Lam B."/>
            <person name="Sakano H."/>
            <person name="Wu T."/>
            <person name="Yu G."/>
            <person name="Miranda M."/>
            <person name="Quach H.L."/>
            <person name="Tripp M."/>
            <person name="Chang C.H."/>
            <person name="Lee J.M."/>
            <person name="Toriumi M.J."/>
            <person name="Chan M.M."/>
            <person name="Tang C.C."/>
            <person name="Onodera C.S."/>
            <person name="Deng J.M."/>
            <person name="Akiyama K."/>
            <person name="Ansari Y."/>
            <person name="Arakawa T."/>
            <person name="Banh J."/>
            <person name="Banno F."/>
            <person name="Bowser L."/>
            <person name="Brooks S.Y."/>
            <person name="Carninci P."/>
            <person name="Chao Q."/>
            <person name="Choy N."/>
            <person name="Enju A."/>
            <person name="Goldsmith A.D."/>
            <person name="Gurjal M."/>
            <person name="Hansen N.F."/>
            <person name="Hayashizaki Y."/>
            <person name="Johnson-Hopson C."/>
            <person name="Hsuan V.W."/>
            <person name="Iida K."/>
            <person name="Karnes M."/>
            <person name="Khan S."/>
            <person name="Koesema E."/>
            <person name="Ishida J."/>
            <person name="Jiang P.X."/>
            <person name="Jones T."/>
            <person name="Kawai J."/>
            <person name="Kamiya A."/>
            <person name="Meyers C."/>
            <person name="Nakajima M."/>
            <person name="Narusaka M."/>
            <person name="Seki M."/>
            <person name="Sakurai T."/>
            <person name="Satou M."/>
            <person name="Tamse R."/>
            <person name="Vaysberg M."/>
            <person name="Wallender E.K."/>
            <person name="Wong C."/>
            <person name="Yamamura Y."/>
            <person name="Yuan S."/>
            <person name="Shinozaki K."/>
            <person name="Davis R.W."/>
            <person name="Theologis A."/>
            <person name="Ecker J.R."/>
        </authorList>
    </citation>
    <scope>NUCLEOTIDE SEQUENCE [LARGE SCALE MRNA]</scope>
    <source>
        <strain>cv. Columbia</strain>
    </source>
</reference>
<reference key="4">
    <citation type="journal article" date="2005" name="Biochem. Biophys. Res. Commun.">
        <title>An Arabidopsis homolog of RAPTOR/KOG1 is essential for early embryo development.</title>
        <authorList>
            <person name="Deprost D."/>
            <person name="Truong H.N."/>
            <person name="Robaglia C."/>
            <person name="Meyer C."/>
        </authorList>
    </citation>
    <scope>TISSUE SPECIFICITY</scope>
    <scope>DISRUPTION PHENOTYPE</scope>
</reference>
<reference key="5">
    <citation type="journal article" date="2005" name="BMC Biol.">
        <title>The Arabidopsis AtRaptor genes are essential for post-embryonic plant growth.</title>
        <authorList>
            <person name="Anderson G.H."/>
            <person name="Veit B."/>
            <person name="Hanson M.R."/>
        </authorList>
    </citation>
    <scope>DISRUPTION PHENOTYPE</scope>
</reference>
<reference key="6">
    <citation type="journal article" date="2005" name="BMC Plant Biol.">
        <title>The Arabidopsis Mei2 homologue AML1 binds AtRaptor1B, the plant homologue of a major regulator of eukaryotic cell growth.</title>
        <authorList>
            <person name="Anderson G.H."/>
            <person name="Hanson M.R."/>
        </authorList>
    </citation>
    <scope>INTERACTION WITH ML1</scope>
</reference>
<reference key="7">
    <citation type="journal article" date="2006" name="Plant Cell">
        <title>Arabidopsis TARGET OF RAPAMYCIN interacts with RAPTOR, which regulates the activity of S6 kinase in response to osmotic stress signals.</title>
        <authorList>
            <person name="Mahfouz M.M."/>
            <person name="Kim S."/>
            <person name="Delauney A.J."/>
            <person name="Verma D.P."/>
        </authorList>
    </citation>
    <scope>FUNCTION</scope>
    <scope>INTERACTION WITH TOR AND ATPK1</scope>
</reference>
<reference key="8">
    <citation type="journal article" date="2016" name="Sci. Rep.">
        <title>Quantitative phosphoproteomics reveals the role of the AMPK plant ortholog SnRK1 as a metabolic master regulator under energy deprivation.</title>
        <authorList>
            <person name="Nukarinen E."/>
            <person name="Naegele T."/>
            <person name="Pedrotti L."/>
            <person name="Wurzinger B."/>
            <person name="Mair A."/>
            <person name="Landgraf R."/>
            <person name="Boernke F."/>
            <person name="Hanson J."/>
            <person name="Teige M."/>
            <person name="Baena-Gonzalez E."/>
            <person name="Droege-Laser W."/>
            <person name="Weckwerth W."/>
        </authorList>
    </citation>
    <scope>INTERACTION WITH KIN10</scope>
    <scope>PHOSPHORYLATION</scope>
    <scope>SUBCELLULAR LOCATION</scope>
    <scope>DISRUPTION PHENOTYPE</scope>
</reference>
<reference evidence="9 10 11 12" key="9">
    <citation type="journal article" date="2017" name="Nature">
        <title>Mechanisms of mTORC1 activation by RHEB and inhibition by PRAS40.</title>
        <authorList>
            <person name="Yang H."/>
            <person name="Jiang X."/>
            <person name="Li B."/>
            <person name="Yang H.J."/>
            <person name="Miller M."/>
            <person name="Yang A."/>
            <person name="Dhar A."/>
            <person name="Pavletich N.P."/>
        </authorList>
    </citation>
    <scope>X-RAY CRYSTALLOGRAPHY (3.00 ANGSTROMS)</scope>
    <scope>FUNCTION</scope>
</reference>
<proteinExistence type="evidence at protein level"/>
<accession>Q93YQ1</accession>
<accession>Q9SR85</accession>
<sequence length="1344" mass="147963">MALGDLMVSRFSQSSVSLVSNHRYDEDCVSSHDDGDSRRKDSEAKSSSSYGNGTTEGAATATSMAYLPQTIVLCELRHDASEASAPLGTSEIVLVPKWRLKERMKTGCVALVLCLNITVDPPDVIKISPCARIEAWIDPFSMAPPKALETIGKNLSTQYERWQPRARYKVQLDPTVDEVRKLCLTCRKYAKTERVLFHYNGHGVPKPTANGEIWVFNKSYTQYIPLPISELDSWLKTPSIYVFDCSAARMILNAFAELHDWGSSGSSGSSRDCILLAACDVHETLPQSVEFPADVFTSCLTTPIKMALKWFCRRSLLKEIIDESLIDRIPGRQNDRKTLLGELNWIFTAVTDTIAWNVLPHELFQRLFRQDLLVASLFRNFLLAERIMRSANCNPISHPMLPPTHQHHMWDAWDMAAEICLSQLPQLVLDPSTEFQPSPFFTEQLTAFEVWLDHGSEHKKPPEQLPIVLQVLLSQCHRFRALVLLGRFLDMGSWAVDLALSVGIFPYVLKLLQTTTNELRQILVFIWTKILALDKSCQIDLVKDGGHTYFIRFLDSSGAFPEQRAMAAFVLAVIVDGHRRGQEACLEANLIGVCLGHLEASRPSDPQPEPLFLQWLCLCLGKLWEDFMEAQIMGREANAFEKLAPLLSEPQPEVRAAAVFALGTLLDIGFDSNKSVVEDEFDDDEKIRAEDAIIKSLLDVVSDGSPLVRAEVAVALARFAFGHKQHLKLAAASYWKPQSSSLLTSLPSIAKFHDPGSATIVSLHMSPLTRASTDSQPVARESRISSSPLGSSGLMQGSPLSDDSSLHSDSGMMHDSVSNGAVHQPRLLDNAVYSQCVRAMFALAKDPSPRIASLGRRVLSIIGIEQVVAKPSKPTGRPGEAATTSHTPLAGLARSSSWFDMHAGNLPLSFRTPPVSPPRTNYLSGLRRVCSLEFRPHLLGSPDSGLADPLLGASGSERSLLPLSTIYGWSCGHFSKPLLGGADASQEIAAKREEKEKFALEHIAKCQHSSISKLNNNPIANWDTRFETGTKTALLHPFSPIVVAADENERIRVWNYEEATLLNGFDNHDFPDKGISKLCLINELDDSLLLVASCDGSVRIWKNYATKGKQKLVTGFSSIQGHKPGARDLNAVVDWQQQSGYLYASGETSTVTLWDLEKEQLVRSVPSESECGVTALSASQVHGGQLAAGFADGSLRLYDVRSPEPLVCATRPHQKVERVVGLSFQPGLDPAKVVSASQAGDIQFLDLRTTRDTYLTIDAHRGSLTALAVHRHAPIIASGSAKQLIKVFSLQGEQLGIIRYYPSFMAQKIGSVSCLTFHPYQVLLAAGAADSFVSIYTHDNSQAR</sequence>
<comment type="function">
    <text evidence="5 7">Probable component of the plant TOR kinase pathway that recruits substrates for TOR (PubMed:16377759, PubMed:29236692). Modulates plant cell growth and regulates the activity of ATPK1 kinase in response to osmotic stress (PubMed:16377759).</text>
</comment>
<comment type="subunit">
    <text evidence="3 5 6">Interacts with TOR, ATPK1 and ML1. Interacts with KIN10 (PubMed:27545962).</text>
</comment>
<comment type="subcellular location">
    <subcellularLocation>
        <location evidence="6">Cytoplasm</location>
    </subcellularLocation>
</comment>
<comment type="tissue specificity">
    <text evidence="2">Expressed in roots, leaves, flowers and seeds.</text>
</comment>
<comment type="PTM">
    <text evidence="6">Phosphorylated by KIN10.</text>
</comment>
<comment type="disruption phenotype">
    <text evidence="2 4 6">Embryonic lethality when homozygous. Embryo development arrested at very early stage (early pre-globular stage), leading to aborted shrunken seeds. Constitutive autophagy (PubMed:27545962).</text>
</comment>
<comment type="similarity">
    <text evidence="8">Belongs to the WD repeat RAPTOR family.</text>
</comment>
<comment type="sequence caution" evidence="8">
    <conflict type="erroneous gene model prediction">
        <sequence resource="EMBL-CDS" id="AAF07837"/>
    </conflict>
</comment>